<name>KAD2_LACBS</name>
<dbReference type="EC" id="2.7.4.3" evidence="1"/>
<dbReference type="EMBL" id="DS547096">
    <property type="protein sequence ID" value="EDR11223.1"/>
    <property type="molecule type" value="Genomic_DNA"/>
</dbReference>
<dbReference type="RefSeq" id="XP_001878524.1">
    <property type="nucleotide sequence ID" value="XM_001878489.1"/>
</dbReference>
<dbReference type="SMR" id="B0D360"/>
<dbReference type="FunCoup" id="B0D360">
    <property type="interactions" value="530"/>
</dbReference>
<dbReference type="STRING" id="486041.B0D360"/>
<dbReference type="GeneID" id="6073701"/>
<dbReference type="KEGG" id="lbc:LACBIDRAFT_290988"/>
<dbReference type="HOGENOM" id="CLU_032354_1_0_1"/>
<dbReference type="InParanoid" id="B0D360"/>
<dbReference type="OrthoDB" id="439792at2759"/>
<dbReference type="Proteomes" id="UP000001194">
    <property type="component" value="Unassembled WGS sequence"/>
</dbReference>
<dbReference type="GO" id="GO:0005829">
    <property type="term" value="C:cytosol"/>
    <property type="evidence" value="ECO:0007669"/>
    <property type="project" value="UniProtKB-SubCell"/>
</dbReference>
<dbReference type="GO" id="GO:0005758">
    <property type="term" value="C:mitochondrial intermembrane space"/>
    <property type="evidence" value="ECO:0007669"/>
    <property type="project" value="UniProtKB-SubCell"/>
</dbReference>
<dbReference type="GO" id="GO:0004017">
    <property type="term" value="F:adenylate kinase activity"/>
    <property type="evidence" value="ECO:0007669"/>
    <property type="project" value="UniProtKB-UniRule"/>
</dbReference>
<dbReference type="GO" id="GO:0005524">
    <property type="term" value="F:ATP binding"/>
    <property type="evidence" value="ECO:0007669"/>
    <property type="project" value="UniProtKB-KW"/>
</dbReference>
<dbReference type="GO" id="GO:0006172">
    <property type="term" value="P:ADP biosynthetic process"/>
    <property type="evidence" value="ECO:0007669"/>
    <property type="project" value="UniProtKB-UniRule"/>
</dbReference>
<dbReference type="GO" id="GO:0046033">
    <property type="term" value="P:AMP metabolic process"/>
    <property type="evidence" value="ECO:0007669"/>
    <property type="project" value="UniProtKB-UniRule"/>
</dbReference>
<dbReference type="GO" id="GO:0046034">
    <property type="term" value="P:ATP metabolic process"/>
    <property type="evidence" value="ECO:0007669"/>
    <property type="project" value="UniProtKB-UniRule"/>
</dbReference>
<dbReference type="CDD" id="cd01428">
    <property type="entry name" value="ADK"/>
    <property type="match status" value="1"/>
</dbReference>
<dbReference type="FunFam" id="3.40.50.300:FF:000106">
    <property type="entry name" value="Adenylate kinase mitochondrial"/>
    <property type="match status" value="1"/>
</dbReference>
<dbReference type="Gene3D" id="3.40.50.300">
    <property type="entry name" value="P-loop containing nucleotide triphosphate hydrolases"/>
    <property type="match status" value="1"/>
</dbReference>
<dbReference type="HAMAP" id="MF_00235">
    <property type="entry name" value="Adenylate_kinase_Adk"/>
    <property type="match status" value="1"/>
</dbReference>
<dbReference type="HAMAP" id="MF_03168">
    <property type="entry name" value="Adenylate_kinase_AK2"/>
    <property type="match status" value="1"/>
</dbReference>
<dbReference type="InterPro" id="IPR006259">
    <property type="entry name" value="Adenyl_kin_sub"/>
</dbReference>
<dbReference type="InterPro" id="IPR000850">
    <property type="entry name" value="Adenylat/UMP-CMP_kin"/>
</dbReference>
<dbReference type="InterPro" id="IPR033690">
    <property type="entry name" value="Adenylat_kinase_CS"/>
</dbReference>
<dbReference type="InterPro" id="IPR007862">
    <property type="entry name" value="Adenylate_kinase_lid-dom"/>
</dbReference>
<dbReference type="InterPro" id="IPR028587">
    <property type="entry name" value="AK2"/>
</dbReference>
<dbReference type="InterPro" id="IPR027417">
    <property type="entry name" value="P-loop_NTPase"/>
</dbReference>
<dbReference type="NCBIfam" id="TIGR01351">
    <property type="entry name" value="adk"/>
    <property type="match status" value="1"/>
</dbReference>
<dbReference type="NCBIfam" id="NF001380">
    <property type="entry name" value="PRK00279.1-2"/>
    <property type="match status" value="1"/>
</dbReference>
<dbReference type="NCBIfam" id="NF001381">
    <property type="entry name" value="PRK00279.1-3"/>
    <property type="match status" value="1"/>
</dbReference>
<dbReference type="NCBIfam" id="NF011100">
    <property type="entry name" value="PRK14527.1"/>
    <property type="match status" value="1"/>
</dbReference>
<dbReference type="PANTHER" id="PTHR23359">
    <property type="entry name" value="NUCLEOTIDE KINASE"/>
    <property type="match status" value="1"/>
</dbReference>
<dbReference type="Pfam" id="PF00406">
    <property type="entry name" value="ADK"/>
    <property type="match status" value="1"/>
</dbReference>
<dbReference type="Pfam" id="PF05191">
    <property type="entry name" value="ADK_lid"/>
    <property type="match status" value="1"/>
</dbReference>
<dbReference type="PRINTS" id="PR00094">
    <property type="entry name" value="ADENYLTKNASE"/>
</dbReference>
<dbReference type="SUPFAM" id="SSF52540">
    <property type="entry name" value="P-loop containing nucleoside triphosphate hydrolases"/>
    <property type="match status" value="1"/>
</dbReference>
<dbReference type="PROSITE" id="PS00113">
    <property type="entry name" value="ADENYLATE_KINASE"/>
    <property type="match status" value="1"/>
</dbReference>
<evidence type="ECO:0000255" key="1">
    <source>
        <dbReference type="HAMAP-Rule" id="MF_03168"/>
    </source>
</evidence>
<accession>B0D360</accession>
<organism>
    <name type="scientific">Laccaria bicolor (strain S238N-H82 / ATCC MYA-4686)</name>
    <name type="common">Bicoloured deceiver</name>
    <name type="synonym">Laccaria laccata var. bicolor</name>
    <dbReference type="NCBI Taxonomy" id="486041"/>
    <lineage>
        <taxon>Eukaryota</taxon>
        <taxon>Fungi</taxon>
        <taxon>Dikarya</taxon>
        <taxon>Basidiomycota</taxon>
        <taxon>Agaricomycotina</taxon>
        <taxon>Agaricomycetes</taxon>
        <taxon>Agaricomycetidae</taxon>
        <taxon>Agaricales</taxon>
        <taxon>Agaricineae</taxon>
        <taxon>Hydnangiaceae</taxon>
        <taxon>Laccaria</taxon>
    </lineage>
</organism>
<sequence length="256" mass="28177">MGASEELEYLKSLVSQLNGKIAAIEAKAKGSPSPTPAQQLRTILIGPPGAGKGTQAPKIRDEFCVCHLATGDMLREQVQQKTPLGIEAKKIMDAGGLVSDDIMVGIIKDQLENNKSCKNGFVLDGFPRTIPQAQKLDGMLAERKEKIDSVVQLLIDDQLLISRITGRLVHPASGRSYHKEFNPPKKRNVDDVTGEPLIQRSDDNVETLTKRLRTFHSQTGPVVDYYKVKGLWHGIDAAQSPSVVWENLRSIFVSKK</sequence>
<proteinExistence type="inferred from homology"/>
<keyword id="KW-0067">ATP-binding</keyword>
<keyword id="KW-0963">Cytoplasm</keyword>
<keyword id="KW-0418">Kinase</keyword>
<keyword id="KW-0496">Mitochondrion</keyword>
<keyword id="KW-0547">Nucleotide-binding</keyword>
<keyword id="KW-1185">Reference proteome</keyword>
<keyword id="KW-0808">Transferase</keyword>
<reference key="1">
    <citation type="journal article" date="2008" name="Nature">
        <title>The genome of Laccaria bicolor provides insights into mycorrhizal symbiosis.</title>
        <authorList>
            <person name="Martin F."/>
            <person name="Aerts A."/>
            <person name="Ahren D."/>
            <person name="Brun A."/>
            <person name="Danchin E.G.J."/>
            <person name="Duchaussoy F."/>
            <person name="Gibon J."/>
            <person name="Kohler A."/>
            <person name="Lindquist E."/>
            <person name="Pereda V."/>
            <person name="Salamov A."/>
            <person name="Shapiro H.J."/>
            <person name="Wuyts J."/>
            <person name="Blaudez D."/>
            <person name="Buee M."/>
            <person name="Brokstein P."/>
            <person name="Canbaeck B."/>
            <person name="Cohen D."/>
            <person name="Courty P.E."/>
            <person name="Coutinho P.M."/>
            <person name="Delaruelle C."/>
            <person name="Detter J.C."/>
            <person name="Deveau A."/>
            <person name="DiFazio S."/>
            <person name="Duplessis S."/>
            <person name="Fraissinet-Tachet L."/>
            <person name="Lucic E."/>
            <person name="Frey-Klett P."/>
            <person name="Fourrey C."/>
            <person name="Feussner I."/>
            <person name="Gay G."/>
            <person name="Grimwood J."/>
            <person name="Hoegger P.J."/>
            <person name="Jain P."/>
            <person name="Kilaru S."/>
            <person name="Labbe J."/>
            <person name="Lin Y.C."/>
            <person name="Legue V."/>
            <person name="Le Tacon F."/>
            <person name="Marmeisse R."/>
            <person name="Melayah D."/>
            <person name="Montanini B."/>
            <person name="Muratet M."/>
            <person name="Nehls U."/>
            <person name="Niculita-Hirzel H."/>
            <person name="Oudot-Le Secq M.P."/>
            <person name="Peter M."/>
            <person name="Quesneville H."/>
            <person name="Rajashekar B."/>
            <person name="Reich M."/>
            <person name="Rouhier N."/>
            <person name="Schmutz J."/>
            <person name="Yin T."/>
            <person name="Chalot M."/>
            <person name="Henrissat B."/>
            <person name="Kuees U."/>
            <person name="Lucas S."/>
            <person name="Van de Peer Y."/>
            <person name="Podila G.K."/>
            <person name="Polle A."/>
            <person name="Pukkila P.J."/>
            <person name="Richardson P.M."/>
            <person name="Rouze P."/>
            <person name="Sanders I.R."/>
            <person name="Stajich J.E."/>
            <person name="Tunlid A."/>
            <person name="Tuskan G."/>
            <person name="Grigoriev I.V."/>
        </authorList>
    </citation>
    <scope>NUCLEOTIDE SEQUENCE [LARGE SCALE GENOMIC DNA]</scope>
    <source>
        <strain>S238N-H82 / ATCC MYA-4686</strain>
    </source>
</reference>
<feature type="chain" id="PRO_0000365676" description="Adenylate kinase">
    <location>
        <begin position="1"/>
        <end position="256"/>
    </location>
</feature>
<feature type="region of interest" description="NMP" evidence="1">
    <location>
        <begin position="69"/>
        <end position="98"/>
    </location>
</feature>
<feature type="region of interest" description="LID" evidence="1">
    <location>
        <begin position="166"/>
        <end position="203"/>
    </location>
</feature>
<feature type="binding site" evidence="1">
    <location>
        <begin position="49"/>
        <end position="54"/>
    </location>
    <ligand>
        <name>ATP</name>
        <dbReference type="ChEBI" id="CHEBI:30616"/>
    </ligand>
</feature>
<feature type="binding site" evidence="1">
    <location>
        <position position="70"/>
    </location>
    <ligand>
        <name>AMP</name>
        <dbReference type="ChEBI" id="CHEBI:456215"/>
    </ligand>
</feature>
<feature type="binding site" evidence="1">
    <location>
        <position position="75"/>
    </location>
    <ligand>
        <name>AMP</name>
        <dbReference type="ChEBI" id="CHEBI:456215"/>
    </ligand>
</feature>
<feature type="binding site" evidence="1">
    <location>
        <begin position="96"/>
        <end position="98"/>
    </location>
    <ligand>
        <name>AMP</name>
        <dbReference type="ChEBI" id="CHEBI:456215"/>
    </ligand>
</feature>
<feature type="binding site" evidence="1">
    <location>
        <begin position="125"/>
        <end position="128"/>
    </location>
    <ligand>
        <name>AMP</name>
        <dbReference type="ChEBI" id="CHEBI:456215"/>
    </ligand>
</feature>
<feature type="binding site" evidence="1">
    <location>
        <position position="132"/>
    </location>
    <ligand>
        <name>AMP</name>
        <dbReference type="ChEBI" id="CHEBI:456215"/>
    </ligand>
</feature>
<feature type="binding site" evidence="1">
    <location>
        <position position="167"/>
    </location>
    <ligand>
        <name>ATP</name>
        <dbReference type="ChEBI" id="CHEBI:30616"/>
    </ligand>
</feature>
<feature type="binding site" evidence="1">
    <location>
        <begin position="176"/>
        <end position="177"/>
    </location>
    <ligand>
        <name>ATP</name>
        <dbReference type="ChEBI" id="CHEBI:30616"/>
    </ligand>
</feature>
<feature type="binding site" evidence="1">
    <location>
        <position position="200"/>
    </location>
    <ligand>
        <name>AMP</name>
        <dbReference type="ChEBI" id="CHEBI:456215"/>
    </ligand>
</feature>
<feature type="binding site" evidence="1">
    <location>
        <position position="211"/>
    </location>
    <ligand>
        <name>AMP</name>
        <dbReference type="ChEBI" id="CHEBI:456215"/>
    </ligand>
</feature>
<feature type="binding site" evidence="1">
    <location>
        <position position="239"/>
    </location>
    <ligand>
        <name>ATP</name>
        <dbReference type="ChEBI" id="CHEBI:30616"/>
    </ligand>
</feature>
<gene>
    <name evidence="1" type="primary">ADK1</name>
    <name type="ORF">LACBIDRAFT_290988</name>
</gene>
<comment type="function">
    <text evidence="1">Catalyzes the reversible transfer of the terminal phosphate group between ATP and AMP. Plays an important role in cellular energy homeostasis and in adenine nucleotide metabolism. Adenylate kinase activity is critical for regulation of the phosphate utilization and the AMP de novo biosynthesis pathways.</text>
</comment>
<comment type="catalytic activity">
    <reaction evidence="1">
        <text>AMP + ATP = 2 ADP</text>
        <dbReference type="Rhea" id="RHEA:12973"/>
        <dbReference type="ChEBI" id="CHEBI:30616"/>
        <dbReference type="ChEBI" id="CHEBI:456215"/>
        <dbReference type="ChEBI" id="CHEBI:456216"/>
        <dbReference type="EC" id="2.7.4.3"/>
    </reaction>
</comment>
<comment type="subunit">
    <text evidence="1">Monomer.</text>
</comment>
<comment type="subcellular location">
    <subcellularLocation>
        <location evidence="1">Cytoplasm</location>
        <location evidence="1">Cytosol</location>
    </subcellularLocation>
    <subcellularLocation>
        <location evidence="1">Mitochondrion intermembrane space</location>
    </subcellularLocation>
    <text evidence="1">Predominantly mitochondrial.</text>
</comment>
<comment type="domain">
    <text evidence="1">Consists of three domains, a large central CORE domain and two small peripheral domains, NMPbind and LID, which undergo movements during catalysis. The LID domain closes over the site of phosphoryl transfer upon ATP binding. Assembling and dissambling the active center during each catalytic cycle provides an effective means to prevent ATP hydrolysis.</text>
</comment>
<comment type="similarity">
    <text evidence="1">Belongs to the adenylate kinase family. AK2 subfamily.</text>
</comment>
<protein>
    <recommendedName>
        <fullName evidence="1">Adenylate kinase</fullName>
        <ecNumber evidence="1">2.7.4.3</ecNumber>
    </recommendedName>
    <alternativeName>
        <fullName evidence="1">ATP-AMP transphosphorylase</fullName>
    </alternativeName>
    <alternativeName>
        <fullName evidence="1">ATP:AMP phosphotransferase</fullName>
    </alternativeName>
    <alternativeName>
        <fullName evidence="1">Adenylate kinase cytosolic and mitochondrial</fullName>
    </alternativeName>
    <alternativeName>
        <fullName evidence="1">Adenylate monophosphate kinase</fullName>
    </alternativeName>
</protein>